<name>FETP_NEIMF</name>
<sequence length="88" mass="10180">MARMVFCVKLNKEAEGMKFPPLPNELGKRIFENVSQEAWAAWTRHQTMLINENRLSLADPRAREYLAQQMEQYFFGDGADAVQGYVPQ</sequence>
<keyword id="KW-0408">Iron</keyword>
<protein>
    <recommendedName>
        <fullName evidence="1">Probable Fe(2+)-trafficking protein</fullName>
    </recommendedName>
</protein>
<accession>A1KW99</accession>
<reference key="1">
    <citation type="journal article" date="2007" name="PLoS Genet.">
        <title>Meningococcal genetic variation mechanisms viewed through comparative analysis of serogroup C strain FAM18.</title>
        <authorList>
            <person name="Bentley S.D."/>
            <person name="Vernikos G.S."/>
            <person name="Snyder L.A.S."/>
            <person name="Churcher C."/>
            <person name="Arrowsmith C."/>
            <person name="Chillingworth T."/>
            <person name="Cronin A."/>
            <person name="Davis P.H."/>
            <person name="Holroyd N.E."/>
            <person name="Jagels K."/>
            <person name="Maddison M."/>
            <person name="Moule S."/>
            <person name="Rabbinowitsch E."/>
            <person name="Sharp S."/>
            <person name="Unwin L."/>
            <person name="Whitehead S."/>
            <person name="Quail M.A."/>
            <person name="Achtman M."/>
            <person name="Barrell B.G."/>
            <person name="Saunders N.J."/>
            <person name="Parkhill J."/>
        </authorList>
    </citation>
    <scope>NUCLEOTIDE SEQUENCE [LARGE SCALE GENOMIC DNA]</scope>
    <source>
        <strain>ATCC 700532 / DSM 15464 / FAM18</strain>
    </source>
</reference>
<dbReference type="EMBL" id="AM421808">
    <property type="protein sequence ID" value="CAM11156.1"/>
    <property type="molecule type" value="Genomic_DNA"/>
</dbReference>
<dbReference type="RefSeq" id="WP_002214948.1">
    <property type="nucleotide sequence ID" value="NC_008767.1"/>
</dbReference>
<dbReference type="SMR" id="A1KW99"/>
<dbReference type="KEGG" id="nmc:NMC2000"/>
<dbReference type="HOGENOM" id="CLU_170994_0_0_4"/>
<dbReference type="Proteomes" id="UP000002286">
    <property type="component" value="Chromosome"/>
</dbReference>
<dbReference type="GO" id="GO:0005829">
    <property type="term" value="C:cytosol"/>
    <property type="evidence" value="ECO:0007669"/>
    <property type="project" value="TreeGrafter"/>
</dbReference>
<dbReference type="GO" id="GO:0005506">
    <property type="term" value="F:iron ion binding"/>
    <property type="evidence" value="ECO:0007669"/>
    <property type="project" value="UniProtKB-UniRule"/>
</dbReference>
<dbReference type="GO" id="GO:0034599">
    <property type="term" value="P:cellular response to oxidative stress"/>
    <property type="evidence" value="ECO:0007669"/>
    <property type="project" value="TreeGrafter"/>
</dbReference>
<dbReference type="FunFam" id="1.10.3880.10:FF:000001">
    <property type="entry name" value="Probable Fe(2+)-trafficking protein"/>
    <property type="match status" value="1"/>
</dbReference>
<dbReference type="Gene3D" id="1.10.3880.10">
    <property type="entry name" value="Fe(II) trafficking protein YggX"/>
    <property type="match status" value="1"/>
</dbReference>
<dbReference type="HAMAP" id="MF_00686">
    <property type="entry name" value="Fe_traffic_YggX"/>
    <property type="match status" value="1"/>
</dbReference>
<dbReference type="InterPro" id="IPR007457">
    <property type="entry name" value="Fe_traffick_prot_YggX"/>
</dbReference>
<dbReference type="InterPro" id="IPR036766">
    <property type="entry name" value="Fe_traffick_prot_YggX_sf"/>
</dbReference>
<dbReference type="NCBIfam" id="NF003817">
    <property type="entry name" value="PRK05408.1"/>
    <property type="match status" value="1"/>
</dbReference>
<dbReference type="PANTHER" id="PTHR36965">
    <property type="entry name" value="FE(2+)-TRAFFICKING PROTEIN-RELATED"/>
    <property type="match status" value="1"/>
</dbReference>
<dbReference type="PANTHER" id="PTHR36965:SF1">
    <property type="entry name" value="FE(2+)-TRAFFICKING PROTEIN-RELATED"/>
    <property type="match status" value="1"/>
</dbReference>
<dbReference type="Pfam" id="PF04362">
    <property type="entry name" value="Iron_traffic"/>
    <property type="match status" value="1"/>
</dbReference>
<dbReference type="PIRSF" id="PIRSF029827">
    <property type="entry name" value="Fe_traffic_YggX"/>
    <property type="match status" value="1"/>
</dbReference>
<dbReference type="SUPFAM" id="SSF111148">
    <property type="entry name" value="YggX-like"/>
    <property type="match status" value="1"/>
</dbReference>
<feature type="chain" id="PRO_1000045047" description="Probable Fe(2+)-trafficking protein">
    <location>
        <begin position="1"/>
        <end position="88"/>
    </location>
</feature>
<comment type="function">
    <text evidence="1">Could be a mediator in iron transactions between iron acquisition and iron-requiring processes, such as synthesis and/or repair of Fe-S clusters in biosynthetic enzymes.</text>
</comment>
<comment type="similarity">
    <text evidence="1">Belongs to the Fe(2+)-trafficking protein family.</text>
</comment>
<gene>
    <name type="ordered locus">NMC2000</name>
</gene>
<proteinExistence type="inferred from homology"/>
<evidence type="ECO:0000255" key="1">
    <source>
        <dbReference type="HAMAP-Rule" id="MF_00686"/>
    </source>
</evidence>
<organism>
    <name type="scientific">Neisseria meningitidis serogroup C / serotype 2a (strain ATCC 700532 / DSM 15464 / FAM18)</name>
    <dbReference type="NCBI Taxonomy" id="272831"/>
    <lineage>
        <taxon>Bacteria</taxon>
        <taxon>Pseudomonadati</taxon>
        <taxon>Pseudomonadota</taxon>
        <taxon>Betaproteobacteria</taxon>
        <taxon>Neisseriales</taxon>
        <taxon>Neisseriaceae</taxon>
        <taxon>Neisseria</taxon>
    </lineage>
</organism>